<organism>
    <name type="scientific">Streptococcus agalactiae serotype Ia (strain ATCC 27591 / A909 / CDC SS700)</name>
    <dbReference type="NCBI Taxonomy" id="205921"/>
    <lineage>
        <taxon>Bacteria</taxon>
        <taxon>Bacillati</taxon>
        <taxon>Bacillota</taxon>
        <taxon>Bacilli</taxon>
        <taxon>Lactobacillales</taxon>
        <taxon>Streptococcaceae</taxon>
        <taxon>Streptococcus</taxon>
    </lineage>
</organism>
<protein>
    <recommendedName>
        <fullName evidence="1">Large ribosomal subunit protein bL35</fullName>
    </recommendedName>
    <alternativeName>
        <fullName evidence="3">50S ribosomal protein L35</fullName>
    </alternativeName>
</protein>
<proteinExistence type="inferred from homology"/>
<reference key="1">
    <citation type="journal article" date="2005" name="Proc. Natl. Acad. Sci. U.S.A.">
        <title>Genome analysis of multiple pathogenic isolates of Streptococcus agalactiae: implications for the microbial 'pan-genome'.</title>
        <authorList>
            <person name="Tettelin H."/>
            <person name="Masignani V."/>
            <person name="Cieslewicz M.J."/>
            <person name="Donati C."/>
            <person name="Medini D."/>
            <person name="Ward N.L."/>
            <person name="Angiuoli S.V."/>
            <person name="Crabtree J."/>
            <person name="Jones A.L."/>
            <person name="Durkin A.S."/>
            <person name="DeBoy R.T."/>
            <person name="Davidsen T.M."/>
            <person name="Mora M."/>
            <person name="Scarselli M."/>
            <person name="Margarit y Ros I."/>
            <person name="Peterson J.D."/>
            <person name="Hauser C.R."/>
            <person name="Sundaram J.P."/>
            <person name="Nelson W.C."/>
            <person name="Madupu R."/>
            <person name="Brinkac L.M."/>
            <person name="Dodson R.J."/>
            <person name="Rosovitz M.J."/>
            <person name="Sullivan S.A."/>
            <person name="Daugherty S.C."/>
            <person name="Haft D.H."/>
            <person name="Selengut J."/>
            <person name="Gwinn M.L."/>
            <person name="Zhou L."/>
            <person name="Zafar N."/>
            <person name="Khouri H."/>
            <person name="Radune D."/>
            <person name="Dimitrov G."/>
            <person name="Watkins K."/>
            <person name="O'Connor K.J."/>
            <person name="Smith S."/>
            <person name="Utterback T.R."/>
            <person name="White O."/>
            <person name="Rubens C.E."/>
            <person name="Grandi G."/>
            <person name="Madoff L.C."/>
            <person name="Kasper D.L."/>
            <person name="Telford J.L."/>
            <person name="Wessels M.R."/>
            <person name="Rappuoli R."/>
            <person name="Fraser C.M."/>
        </authorList>
    </citation>
    <scope>NUCLEOTIDE SEQUENCE [LARGE SCALE GENOMIC DNA]</scope>
    <source>
        <strain>ATCC 27591 / A909 / CDC SS700</strain>
    </source>
</reference>
<keyword id="KW-0687">Ribonucleoprotein</keyword>
<keyword id="KW-0689">Ribosomal protein</keyword>
<sequence length="66" mass="7768">MPKQKTHRASAKRFKRTGSGGLKRFRAFTSHRFHGKTKKQRRHLRKATMVSSGDFKRIKAMLTRLK</sequence>
<evidence type="ECO:0000255" key="1">
    <source>
        <dbReference type="HAMAP-Rule" id="MF_00514"/>
    </source>
</evidence>
<evidence type="ECO:0000256" key="2">
    <source>
        <dbReference type="SAM" id="MobiDB-lite"/>
    </source>
</evidence>
<evidence type="ECO:0000305" key="3"/>
<accession>Q3K0C9</accession>
<gene>
    <name evidence="1" type="primary">rpmI</name>
    <name type="ordered locus">SAK_1416</name>
</gene>
<comment type="similarity">
    <text evidence="1">Belongs to the bacterial ribosomal protein bL35 family.</text>
</comment>
<feature type="chain" id="PRO_0000258761" description="Large ribosomal subunit protein bL35">
    <location>
        <begin position="1"/>
        <end position="66"/>
    </location>
</feature>
<feature type="region of interest" description="Disordered" evidence="2">
    <location>
        <begin position="1"/>
        <end position="21"/>
    </location>
</feature>
<feature type="compositionally biased region" description="Basic residues" evidence="2">
    <location>
        <begin position="1"/>
        <end position="16"/>
    </location>
</feature>
<name>RL35_STRA1</name>
<dbReference type="EMBL" id="CP000114">
    <property type="protein sequence ID" value="ABA45484.1"/>
    <property type="molecule type" value="Genomic_DNA"/>
</dbReference>
<dbReference type="RefSeq" id="WP_001125940.1">
    <property type="nucleotide sequence ID" value="NC_007432.1"/>
</dbReference>
<dbReference type="SMR" id="Q3K0C9"/>
<dbReference type="KEGG" id="sak:SAK_1416"/>
<dbReference type="HOGENOM" id="CLU_169643_3_0_9"/>
<dbReference type="GO" id="GO:0022625">
    <property type="term" value="C:cytosolic large ribosomal subunit"/>
    <property type="evidence" value="ECO:0007669"/>
    <property type="project" value="TreeGrafter"/>
</dbReference>
<dbReference type="GO" id="GO:0003735">
    <property type="term" value="F:structural constituent of ribosome"/>
    <property type="evidence" value="ECO:0007669"/>
    <property type="project" value="InterPro"/>
</dbReference>
<dbReference type="GO" id="GO:0006412">
    <property type="term" value="P:translation"/>
    <property type="evidence" value="ECO:0007669"/>
    <property type="project" value="UniProtKB-UniRule"/>
</dbReference>
<dbReference type="FunFam" id="4.10.410.60:FF:000001">
    <property type="entry name" value="50S ribosomal protein L35"/>
    <property type="match status" value="1"/>
</dbReference>
<dbReference type="Gene3D" id="4.10.410.60">
    <property type="match status" value="1"/>
</dbReference>
<dbReference type="HAMAP" id="MF_00514">
    <property type="entry name" value="Ribosomal_bL35"/>
    <property type="match status" value="1"/>
</dbReference>
<dbReference type="InterPro" id="IPR001706">
    <property type="entry name" value="Ribosomal_bL35"/>
</dbReference>
<dbReference type="InterPro" id="IPR021137">
    <property type="entry name" value="Ribosomal_bL35-like"/>
</dbReference>
<dbReference type="InterPro" id="IPR018265">
    <property type="entry name" value="Ribosomal_bL35_CS"/>
</dbReference>
<dbReference type="InterPro" id="IPR037229">
    <property type="entry name" value="Ribosomal_bL35_sf"/>
</dbReference>
<dbReference type="NCBIfam" id="TIGR00001">
    <property type="entry name" value="rpmI_bact"/>
    <property type="match status" value="1"/>
</dbReference>
<dbReference type="PANTHER" id="PTHR33343">
    <property type="entry name" value="54S RIBOSOMAL PROTEIN BL35M"/>
    <property type="match status" value="1"/>
</dbReference>
<dbReference type="PANTHER" id="PTHR33343:SF1">
    <property type="entry name" value="LARGE RIBOSOMAL SUBUNIT PROTEIN BL35M"/>
    <property type="match status" value="1"/>
</dbReference>
<dbReference type="Pfam" id="PF01632">
    <property type="entry name" value="Ribosomal_L35p"/>
    <property type="match status" value="1"/>
</dbReference>
<dbReference type="PRINTS" id="PR00064">
    <property type="entry name" value="RIBOSOMALL35"/>
</dbReference>
<dbReference type="SUPFAM" id="SSF143034">
    <property type="entry name" value="L35p-like"/>
    <property type="match status" value="1"/>
</dbReference>
<dbReference type="PROSITE" id="PS00936">
    <property type="entry name" value="RIBOSOMAL_L35"/>
    <property type="match status" value="1"/>
</dbReference>